<keyword id="KW-0010">Activator</keyword>
<keyword id="KW-0238">DNA-binding</keyword>
<keyword id="KW-1185">Reference proteome</keyword>
<keyword id="KW-0678">Repressor</keyword>
<keyword id="KW-0804">Transcription</keyword>
<keyword id="KW-0805">Transcription regulation</keyword>
<organism>
    <name type="scientific">Shigella flexneri</name>
    <dbReference type="NCBI Taxonomy" id="623"/>
    <lineage>
        <taxon>Bacteria</taxon>
        <taxon>Pseudomonadati</taxon>
        <taxon>Pseudomonadota</taxon>
        <taxon>Gammaproteobacteria</taxon>
        <taxon>Enterobacterales</taxon>
        <taxon>Enterobacteriaceae</taxon>
        <taxon>Shigella</taxon>
    </lineage>
</organism>
<evidence type="ECO:0000255" key="1">
    <source>
        <dbReference type="HAMAP-Rule" id="MF_01449"/>
    </source>
</evidence>
<accession>Q83SP3</accession>
<accession>Q7UDT0</accession>
<reference key="1">
    <citation type="journal article" date="2002" name="Nucleic Acids Res.">
        <title>Genome sequence of Shigella flexneri 2a: insights into pathogenicity through comparison with genomes of Escherichia coli K12 and O157.</title>
        <authorList>
            <person name="Jin Q."/>
            <person name="Yuan Z."/>
            <person name="Xu J."/>
            <person name="Wang Y."/>
            <person name="Shen Y."/>
            <person name="Lu W."/>
            <person name="Wang J."/>
            <person name="Liu H."/>
            <person name="Yang J."/>
            <person name="Yang F."/>
            <person name="Zhang X."/>
            <person name="Zhang J."/>
            <person name="Yang G."/>
            <person name="Wu H."/>
            <person name="Qu D."/>
            <person name="Dong J."/>
            <person name="Sun L."/>
            <person name="Xue Y."/>
            <person name="Zhao A."/>
            <person name="Gao Y."/>
            <person name="Zhu J."/>
            <person name="Kan B."/>
            <person name="Ding K."/>
            <person name="Chen S."/>
            <person name="Cheng H."/>
            <person name="Yao Z."/>
            <person name="He B."/>
            <person name="Chen R."/>
            <person name="Ma D."/>
            <person name="Qiang B."/>
            <person name="Wen Y."/>
            <person name="Hou Y."/>
            <person name="Yu J."/>
        </authorList>
    </citation>
    <scope>NUCLEOTIDE SEQUENCE [LARGE SCALE GENOMIC DNA]</scope>
    <source>
        <strain>301 / Serotype 2a</strain>
    </source>
</reference>
<reference key="2">
    <citation type="journal article" date="2003" name="Infect. Immun.">
        <title>Complete genome sequence and comparative genomics of Shigella flexneri serotype 2a strain 2457T.</title>
        <authorList>
            <person name="Wei J."/>
            <person name="Goldberg M.B."/>
            <person name="Burland V."/>
            <person name="Venkatesan M.M."/>
            <person name="Deng W."/>
            <person name="Fournier G."/>
            <person name="Mayhew G.F."/>
            <person name="Plunkett G. III"/>
            <person name="Rose D.J."/>
            <person name="Darling A."/>
            <person name="Mau B."/>
            <person name="Perna N.T."/>
            <person name="Payne S.M."/>
            <person name="Runyen-Janecky L.J."/>
            <person name="Zhou S."/>
            <person name="Schwartz D.C."/>
            <person name="Blattner F.R."/>
        </authorList>
    </citation>
    <scope>NUCLEOTIDE SEQUENCE [LARGE SCALE GENOMIC DNA]</scope>
    <source>
        <strain>ATCC 700930 / 2457T / Serotype 2a</strain>
    </source>
</reference>
<sequence length="551" mass="63966">MPSARLQQQFIRLWQCCEGKSQDTTLNELAALLSCSRRHMRTLLNTMQDRGWLTWEAEVGRGKRSRLTFLYTGLALQQQRAEDLLEQDRIDQLVQLVGDKATVRQMLVSHLGRSFRQGRHILRVLYYRPLRNLLPGSALRRSETHIARQIFSSLTRINEENGELEADIAHHWQQISPLHWRFFLRPGVHFHHGRELEMDDVIASLKRINTLPLYSHITDIVSPTPWTLDIHLTQPDRWLPLLLGQVPAMILPCEWETLSNFASHPIGTGPYAVIRNSTNQLKIQAFDDFFGYRALIDEVNVWVLPEIADEPAGGLMLKGPQGEKKEIESRLEEGCYYLLFDSRTHRGANQQVRDWVSYVLSPTNLVYFAEEQYQQLWFPAYGLLPRWHHARTIKSEKPAGLESLTLTFYQDHSEHRVIAGIMQQILASHQVTLEIKEISYDQWHEGEIESDIWLNSANFTLPLDFSLFAHLCEVPLLQHCIPIDWQADAARWRNGEMNLANWCQQLVASKAMVPLIHHWLIIQGQRSMRGLRMNTLGWFDFKSAWFAPPDP</sequence>
<dbReference type="EMBL" id="AE005674">
    <property type="protein sequence ID" value="AAN41729.2"/>
    <property type="molecule type" value="Genomic_DNA"/>
</dbReference>
<dbReference type="EMBL" id="AE014073">
    <property type="protein sequence ID" value="AAP15610.1"/>
    <property type="molecule type" value="Genomic_DNA"/>
</dbReference>
<dbReference type="RefSeq" id="WP_005053586.1">
    <property type="nucleotide sequence ID" value="NZ_WPGW01000005.1"/>
</dbReference>
<dbReference type="SMR" id="Q83SP3"/>
<dbReference type="STRING" id="198214.SF0064"/>
<dbReference type="PaxDb" id="198214-SF0064"/>
<dbReference type="KEGG" id="sfl:SF0064"/>
<dbReference type="KEGG" id="sfx:S0066"/>
<dbReference type="PATRIC" id="fig|198214.7.peg.75"/>
<dbReference type="HOGENOM" id="CLU_017028_12_3_6"/>
<dbReference type="Proteomes" id="UP000001006">
    <property type="component" value="Chromosome"/>
</dbReference>
<dbReference type="Proteomes" id="UP000002673">
    <property type="component" value="Chromosome"/>
</dbReference>
<dbReference type="GO" id="GO:0003677">
    <property type="term" value="F:DNA binding"/>
    <property type="evidence" value="ECO:0007669"/>
    <property type="project" value="UniProtKB-KW"/>
</dbReference>
<dbReference type="GO" id="GO:1904680">
    <property type="term" value="F:peptide transmembrane transporter activity"/>
    <property type="evidence" value="ECO:0007669"/>
    <property type="project" value="TreeGrafter"/>
</dbReference>
<dbReference type="GO" id="GO:0045892">
    <property type="term" value="P:negative regulation of DNA-templated transcription"/>
    <property type="evidence" value="ECO:0007669"/>
    <property type="project" value="UniProtKB-UniRule"/>
</dbReference>
<dbReference type="GO" id="GO:0015833">
    <property type="term" value="P:peptide transport"/>
    <property type="evidence" value="ECO:0007669"/>
    <property type="project" value="TreeGrafter"/>
</dbReference>
<dbReference type="GO" id="GO:0045893">
    <property type="term" value="P:positive regulation of DNA-templated transcription"/>
    <property type="evidence" value="ECO:0007669"/>
    <property type="project" value="UniProtKB-UniRule"/>
</dbReference>
<dbReference type="CDD" id="cd08507">
    <property type="entry name" value="PBP2_SgrR_like"/>
    <property type="match status" value="1"/>
</dbReference>
<dbReference type="FunFam" id="3.40.190.10:FF:000070">
    <property type="entry name" value="HTH-type transcriptional regulator SgrR"/>
    <property type="match status" value="1"/>
</dbReference>
<dbReference type="Gene3D" id="3.40.190.10">
    <property type="entry name" value="Periplasmic binding protein-like II"/>
    <property type="match status" value="1"/>
</dbReference>
<dbReference type="HAMAP" id="MF_01449">
    <property type="entry name" value="HTH_type_SgrR"/>
    <property type="match status" value="1"/>
</dbReference>
<dbReference type="InterPro" id="IPR039424">
    <property type="entry name" value="SBP_5"/>
</dbReference>
<dbReference type="InterPro" id="IPR000914">
    <property type="entry name" value="SBP_5_dom"/>
</dbReference>
<dbReference type="InterPro" id="IPR025370">
    <property type="entry name" value="SgrR_HTH_N"/>
</dbReference>
<dbReference type="InterPro" id="IPR023767">
    <property type="entry name" value="Tscrpt_reg_SgrR"/>
</dbReference>
<dbReference type="NCBIfam" id="NF010149">
    <property type="entry name" value="PRK13626.1"/>
    <property type="match status" value="1"/>
</dbReference>
<dbReference type="PANTHER" id="PTHR30290:SF72">
    <property type="entry name" value="HTH-TYPE TRANSCRIPTIONAL REGULATOR SGRR"/>
    <property type="match status" value="1"/>
</dbReference>
<dbReference type="PANTHER" id="PTHR30290">
    <property type="entry name" value="PERIPLASMIC BINDING COMPONENT OF ABC TRANSPORTER"/>
    <property type="match status" value="1"/>
</dbReference>
<dbReference type="Pfam" id="PF00496">
    <property type="entry name" value="SBP_bac_5"/>
    <property type="match status" value="1"/>
</dbReference>
<dbReference type="Pfam" id="PF12793">
    <property type="entry name" value="SgrR_N"/>
    <property type="match status" value="1"/>
</dbReference>
<dbReference type="SUPFAM" id="SSF53850">
    <property type="entry name" value="Periplasmic binding protein-like II"/>
    <property type="match status" value="1"/>
</dbReference>
<protein>
    <recommendedName>
        <fullName evidence="1">HTH-type transcriptional regulator SgrR</fullName>
    </recommendedName>
</protein>
<gene>
    <name evidence="1" type="primary">sgrR</name>
    <name type="ordered locus">SF0064</name>
    <name type="ordered locus">S0066</name>
</gene>
<name>SGRR_SHIFL</name>
<comment type="function">
    <text evidence="1">Activates the small RNA gene sgrS under glucose-phosphate stress conditions as well as yfdZ. Represses its own transcription under both stress and non-stress conditions. Might act as a sensor of the intracellular accumulation of phosphoglucose by binding these molecules in its C-terminal solute-binding domain.</text>
</comment>
<feature type="chain" id="PRO_0000309253" description="HTH-type transcriptional regulator SgrR">
    <location>
        <begin position="1"/>
        <end position="551"/>
    </location>
</feature>
<feature type="domain" description="HTH marR-type" evidence="1">
    <location>
        <begin position="1"/>
        <end position="116"/>
    </location>
</feature>
<feature type="DNA-binding region" description="H-T-H motif" evidence="1">
    <location>
        <begin position="26"/>
        <end position="49"/>
    </location>
</feature>
<feature type="region of interest" description="Solute-binding" evidence="1">
    <location>
        <begin position="163"/>
        <end position="492"/>
    </location>
</feature>
<proteinExistence type="inferred from homology"/>